<protein>
    <recommendedName>
        <fullName evidence="2">Ribosome biogenesis protein YTM1</fullName>
    </recommendedName>
</protein>
<gene>
    <name evidence="2" type="primary">YTM1</name>
    <name type="ORF">PGUG_04043</name>
</gene>
<proteinExistence type="inferred from homology"/>
<dbReference type="EMBL" id="CH408159">
    <property type="protein sequence ID" value="EDK39945.2"/>
    <property type="molecule type" value="Genomic_DNA"/>
</dbReference>
<dbReference type="RefSeq" id="XP_001483314.1">
    <property type="nucleotide sequence ID" value="XM_001483264.1"/>
</dbReference>
<dbReference type="SMR" id="A5DL92"/>
<dbReference type="FunCoup" id="A5DL92">
    <property type="interactions" value="933"/>
</dbReference>
<dbReference type="STRING" id="294746.A5DL92"/>
<dbReference type="GeneID" id="5125120"/>
<dbReference type="KEGG" id="pgu:PGUG_04043"/>
<dbReference type="VEuPathDB" id="FungiDB:PGUG_04043"/>
<dbReference type="eggNOG" id="KOG0313">
    <property type="taxonomic scope" value="Eukaryota"/>
</dbReference>
<dbReference type="HOGENOM" id="CLU_000288_57_0_1"/>
<dbReference type="InParanoid" id="A5DL92"/>
<dbReference type="OMA" id="DHKYVEF"/>
<dbReference type="OrthoDB" id="10251381at2759"/>
<dbReference type="Proteomes" id="UP000001997">
    <property type="component" value="Unassembled WGS sequence"/>
</dbReference>
<dbReference type="GO" id="GO:0005654">
    <property type="term" value="C:nucleoplasm"/>
    <property type="evidence" value="ECO:0007669"/>
    <property type="project" value="UniProtKB-SubCell"/>
</dbReference>
<dbReference type="GO" id="GO:0070545">
    <property type="term" value="C:PeBoW complex"/>
    <property type="evidence" value="ECO:0007669"/>
    <property type="project" value="EnsemblFungi"/>
</dbReference>
<dbReference type="GO" id="GO:0030687">
    <property type="term" value="C:preribosome, large subunit precursor"/>
    <property type="evidence" value="ECO:0007669"/>
    <property type="project" value="UniProtKB-UniRule"/>
</dbReference>
<dbReference type="GO" id="GO:0043021">
    <property type="term" value="F:ribonucleoprotein complex binding"/>
    <property type="evidence" value="ECO:0007669"/>
    <property type="project" value="UniProtKB-UniRule"/>
</dbReference>
<dbReference type="GO" id="GO:0051276">
    <property type="term" value="P:chromosome organization"/>
    <property type="evidence" value="ECO:0007669"/>
    <property type="project" value="EnsemblFungi"/>
</dbReference>
<dbReference type="GO" id="GO:0000466">
    <property type="term" value="P:maturation of 5.8S rRNA from tricistronic rRNA transcript (SSU-rRNA, 5.8S rRNA, LSU-rRNA)"/>
    <property type="evidence" value="ECO:0007669"/>
    <property type="project" value="UniProtKB-UniRule"/>
</dbReference>
<dbReference type="GO" id="GO:0000463">
    <property type="term" value="P:maturation of LSU-rRNA from tricistronic rRNA transcript (SSU-rRNA, 5.8S rRNA, LSU-rRNA)"/>
    <property type="evidence" value="ECO:0007669"/>
    <property type="project" value="UniProtKB-UniRule"/>
</dbReference>
<dbReference type="GO" id="GO:0110136">
    <property type="term" value="P:protein-RNA complex remodeling"/>
    <property type="evidence" value="ECO:0007669"/>
    <property type="project" value="EnsemblFungi"/>
</dbReference>
<dbReference type="CDD" id="cd00200">
    <property type="entry name" value="WD40"/>
    <property type="match status" value="1"/>
</dbReference>
<dbReference type="Gene3D" id="2.130.10.10">
    <property type="entry name" value="YVTN repeat-like/Quinoprotein amine dehydrogenase"/>
    <property type="match status" value="1"/>
</dbReference>
<dbReference type="HAMAP" id="MF_03029">
    <property type="entry name" value="WDR12"/>
    <property type="match status" value="1"/>
</dbReference>
<dbReference type="InterPro" id="IPR020472">
    <property type="entry name" value="G-protein_beta_WD-40_rep"/>
</dbReference>
<dbReference type="InterPro" id="IPR012972">
    <property type="entry name" value="NLE"/>
</dbReference>
<dbReference type="InterPro" id="IPR015943">
    <property type="entry name" value="WD40/YVTN_repeat-like_dom_sf"/>
</dbReference>
<dbReference type="InterPro" id="IPR019775">
    <property type="entry name" value="WD40_repeat_CS"/>
</dbReference>
<dbReference type="InterPro" id="IPR036322">
    <property type="entry name" value="WD40_repeat_dom_sf"/>
</dbReference>
<dbReference type="InterPro" id="IPR001680">
    <property type="entry name" value="WD40_rpt"/>
</dbReference>
<dbReference type="InterPro" id="IPR028599">
    <property type="entry name" value="WDR12/Ytm1"/>
</dbReference>
<dbReference type="PANTHER" id="PTHR19855:SF11">
    <property type="entry name" value="RIBOSOME BIOGENESIS PROTEIN WDR12"/>
    <property type="match status" value="1"/>
</dbReference>
<dbReference type="PANTHER" id="PTHR19855">
    <property type="entry name" value="WD40 REPEAT PROTEIN 12, 37"/>
    <property type="match status" value="1"/>
</dbReference>
<dbReference type="Pfam" id="PF08154">
    <property type="entry name" value="NLE"/>
    <property type="match status" value="1"/>
</dbReference>
<dbReference type="Pfam" id="PF00400">
    <property type="entry name" value="WD40"/>
    <property type="match status" value="4"/>
</dbReference>
<dbReference type="PRINTS" id="PR00320">
    <property type="entry name" value="GPROTEINBRPT"/>
</dbReference>
<dbReference type="SMART" id="SM00320">
    <property type="entry name" value="WD40"/>
    <property type="match status" value="7"/>
</dbReference>
<dbReference type="SUPFAM" id="SSF50978">
    <property type="entry name" value="WD40 repeat-like"/>
    <property type="match status" value="1"/>
</dbReference>
<dbReference type="PROSITE" id="PS00678">
    <property type="entry name" value="WD_REPEATS_1"/>
    <property type="match status" value="1"/>
</dbReference>
<dbReference type="PROSITE" id="PS50082">
    <property type="entry name" value="WD_REPEATS_2"/>
    <property type="match status" value="4"/>
</dbReference>
<dbReference type="PROSITE" id="PS50294">
    <property type="entry name" value="WD_REPEATS_REGION"/>
    <property type="match status" value="1"/>
</dbReference>
<evidence type="ECO:0000250" key="1"/>
<evidence type="ECO:0000255" key="2">
    <source>
        <dbReference type="HAMAP-Rule" id="MF_03029"/>
    </source>
</evidence>
<name>YTM1_PICGU</name>
<reference key="1">
    <citation type="journal article" date="2009" name="Nature">
        <title>Evolution of pathogenicity and sexual reproduction in eight Candida genomes.</title>
        <authorList>
            <person name="Butler G."/>
            <person name="Rasmussen M.D."/>
            <person name="Lin M.F."/>
            <person name="Santos M.A.S."/>
            <person name="Sakthikumar S."/>
            <person name="Munro C.A."/>
            <person name="Rheinbay E."/>
            <person name="Grabherr M."/>
            <person name="Forche A."/>
            <person name="Reedy J.L."/>
            <person name="Agrafioti I."/>
            <person name="Arnaud M.B."/>
            <person name="Bates S."/>
            <person name="Brown A.J.P."/>
            <person name="Brunke S."/>
            <person name="Costanzo M.C."/>
            <person name="Fitzpatrick D.A."/>
            <person name="de Groot P.W.J."/>
            <person name="Harris D."/>
            <person name="Hoyer L.L."/>
            <person name="Hube B."/>
            <person name="Klis F.M."/>
            <person name="Kodira C."/>
            <person name="Lennard N."/>
            <person name="Logue M.E."/>
            <person name="Martin R."/>
            <person name="Neiman A.M."/>
            <person name="Nikolaou E."/>
            <person name="Quail M.A."/>
            <person name="Quinn J."/>
            <person name="Santos M.C."/>
            <person name="Schmitzberger F.F."/>
            <person name="Sherlock G."/>
            <person name="Shah P."/>
            <person name="Silverstein K.A.T."/>
            <person name="Skrzypek M.S."/>
            <person name="Soll D."/>
            <person name="Staggs R."/>
            <person name="Stansfield I."/>
            <person name="Stumpf M.P.H."/>
            <person name="Sudbery P.E."/>
            <person name="Srikantha T."/>
            <person name="Zeng Q."/>
            <person name="Berman J."/>
            <person name="Berriman M."/>
            <person name="Heitman J."/>
            <person name="Gow N.A.R."/>
            <person name="Lorenz M.C."/>
            <person name="Birren B.W."/>
            <person name="Kellis M."/>
            <person name="Cuomo C.A."/>
        </authorList>
    </citation>
    <scope>NUCLEOTIDE SEQUENCE [LARGE SCALE GENOMIC DNA]</scope>
    <source>
        <strain>ATCC 6260 / CBS 566 / DSM 6381 / JCM 1539 / NBRC 10279 / NRRL Y-324</strain>
    </source>
</reference>
<accession>A5DL92</accession>
<sequence>MLIAFCTCEIFHLTMTDQVKVRFFTNEEDDLKVSENPIFVPVSLKRYGLSEIVNHLLNDGETKKAIPFDFLVDGVLLRTSLQDYLTKQGLSTETVIDLQYTRAVLPPSFLASFTNEDWISSIDTINPGHGAVLASNMKLQESKILSGSYDGVVRTYNMSGEVESQYIGHSGPVKSVRWISPTRIVSAGNDHSLRLWKTKLAGVEEGAEDGKTTAILEGHKGPVVDLAVDYKSNKIISAGNDSVVGVWSTNASDMSAVTVSEPTGSTMSKKRKKLALQDSTIKRRAPLAMMDGHGQPVTGVCFDVNDKSVIYSASQDHTIKTWDLVTSRCVDTRSTGFSLLSILQLPNLHLVASGSSARHINLHDPRASSSTEQVSRKLVGHTNFVVSMAACPDKDHMFASASHDGTVKVWDVRADKAMYTLGKGGKVFGVSWDPIGIVSGGEDKKIDIYREAN</sequence>
<feature type="chain" id="PRO_0000369597" description="Ribosome biogenesis protein YTM1">
    <location>
        <begin position="1"/>
        <end position="453"/>
    </location>
</feature>
<feature type="repeat" description="WD 1">
    <location>
        <begin position="128"/>
        <end position="166"/>
    </location>
</feature>
<feature type="repeat" description="WD 2">
    <location>
        <begin position="168"/>
        <end position="206"/>
    </location>
</feature>
<feature type="repeat" description="WD 3">
    <location>
        <begin position="218"/>
        <end position="257"/>
    </location>
</feature>
<feature type="repeat" description="WD 4">
    <location>
        <begin position="292"/>
        <end position="332"/>
    </location>
</feature>
<feature type="repeat" description="WD 5">
    <location>
        <begin position="334"/>
        <end position="373"/>
    </location>
</feature>
<feature type="repeat" description="WD 6">
    <location>
        <begin position="380"/>
        <end position="420"/>
    </location>
</feature>
<feature type="repeat" description="WD 7">
    <location>
        <begin position="422"/>
        <end position="453"/>
    </location>
</feature>
<feature type="region of interest" description="Ubiquitin-like (UBL) domain" evidence="2">
    <location>
        <begin position="19"/>
        <end position="102"/>
    </location>
</feature>
<feature type="region of interest" description="Sufficient for interaction with ERB1 and association with 66S pre-ribosomes" evidence="1">
    <location>
        <begin position="112"/>
        <end position="453"/>
    </location>
</feature>
<keyword id="KW-0539">Nucleus</keyword>
<keyword id="KW-1185">Reference proteome</keyword>
<keyword id="KW-0677">Repeat</keyword>
<keyword id="KW-0690">Ribosome biogenesis</keyword>
<keyword id="KW-0698">rRNA processing</keyword>
<keyword id="KW-0853">WD repeat</keyword>
<comment type="function">
    <text evidence="2">Component of the NOP7 complex, which is required for maturation of the 25S and 5.8S ribosomal RNAs and formation of the 60S ribosome.</text>
</comment>
<comment type="subunit">
    <text evidence="2">Component of the NOP7 complex, composed of ERB1, NOP7 and YTM1. The complex is held together by ERB1, which interacts with NOP7 via its N-terminal domain and with YTM1 via a high-affinity interaction between the seven-bladed beta-propeller domains of the 2 proteins. The NOP7 complex associates with the 66S pre-ribosome. Interacts (via UBL domain) with MDN1 (via VWFA/MIDAS domain).</text>
</comment>
<comment type="subcellular location">
    <subcellularLocation>
        <location evidence="2">Nucleus</location>
        <location evidence="2">Nucleolus</location>
    </subcellularLocation>
    <subcellularLocation>
        <location evidence="2">Nucleus</location>
        <location evidence="2">Nucleoplasm</location>
    </subcellularLocation>
</comment>
<comment type="similarity">
    <text evidence="2">Belongs to the WD repeat WDR12/YTM1 family.</text>
</comment>
<organism>
    <name type="scientific">Meyerozyma guilliermondii (strain ATCC 6260 / CBS 566 / DSM 6381 / JCM 1539 / NBRC 10279 / NRRL Y-324)</name>
    <name type="common">Yeast</name>
    <name type="synonym">Candida guilliermondii</name>
    <dbReference type="NCBI Taxonomy" id="294746"/>
    <lineage>
        <taxon>Eukaryota</taxon>
        <taxon>Fungi</taxon>
        <taxon>Dikarya</taxon>
        <taxon>Ascomycota</taxon>
        <taxon>Saccharomycotina</taxon>
        <taxon>Pichiomycetes</taxon>
        <taxon>Debaryomycetaceae</taxon>
        <taxon>Meyerozyma</taxon>
    </lineage>
</organism>